<proteinExistence type="inferred from homology"/>
<accession>B5FJM4</accession>
<organism>
    <name type="scientific">Salmonella dublin (strain CT_02021853)</name>
    <dbReference type="NCBI Taxonomy" id="439851"/>
    <lineage>
        <taxon>Bacteria</taxon>
        <taxon>Pseudomonadati</taxon>
        <taxon>Pseudomonadota</taxon>
        <taxon>Gammaproteobacteria</taxon>
        <taxon>Enterobacterales</taxon>
        <taxon>Enterobacteriaceae</taxon>
        <taxon>Salmonella</taxon>
    </lineage>
</organism>
<dbReference type="EMBL" id="CP001144">
    <property type="protein sequence ID" value="ACH73739.1"/>
    <property type="molecule type" value="Genomic_DNA"/>
</dbReference>
<dbReference type="RefSeq" id="WP_000820705.1">
    <property type="nucleotide sequence ID" value="NC_011205.1"/>
</dbReference>
<dbReference type="SMR" id="B5FJM4"/>
<dbReference type="GeneID" id="66757785"/>
<dbReference type="KEGG" id="sed:SeD_A3818"/>
<dbReference type="HOGENOM" id="CLU_155943_1_0_6"/>
<dbReference type="Proteomes" id="UP000008322">
    <property type="component" value="Chromosome"/>
</dbReference>
<dbReference type="GO" id="GO:0005737">
    <property type="term" value="C:cytoplasm"/>
    <property type="evidence" value="ECO:0007669"/>
    <property type="project" value="UniProtKB-SubCell"/>
</dbReference>
<dbReference type="GO" id="GO:0008033">
    <property type="term" value="P:tRNA processing"/>
    <property type="evidence" value="ECO:0007669"/>
    <property type="project" value="UniProtKB-UniRule"/>
</dbReference>
<dbReference type="Gene3D" id="3.40.1260.10">
    <property type="entry name" value="DsrEFH-like"/>
    <property type="match status" value="1"/>
</dbReference>
<dbReference type="HAMAP" id="MF_00389">
    <property type="entry name" value="Thiourid_synth_C"/>
    <property type="match status" value="1"/>
</dbReference>
<dbReference type="InterPro" id="IPR027396">
    <property type="entry name" value="DsrEFH-like"/>
</dbReference>
<dbReference type="InterPro" id="IPR003787">
    <property type="entry name" value="Sulphur_relay_DsrE/F-like"/>
</dbReference>
<dbReference type="InterPro" id="IPR037450">
    <property type="entry name" value="Sulphur_relay_TusC"/>
</dbReference>
<dbReference type="InterPro" id="IPR017462">
    <property type="entry name" value="Sulphur_relay_TusC/DsrF"/>
</dbReference>
<dbReference type="NCBIfam" id="NF001238">
    <property type="entry name" value="PRK00211.1"/>
    <property type="match status" value="1"/>
</dbReference>
<dbReference type="NCBIfam" id="TIGR03010">
    <property type="entry name" value="sulf_tusC_dsrF"/>
    <property type="match status" value="1"/>
</dbReference>
<dbReference type="PANTHER" id="PTHR38780">
    <property type="entry name" value="PROTEIN TUSC"/>
    <property type="match status" value="1"/>
</dbReference>
<dbReference type="PANTHER" id="PTHR38780:SF1">
    <property type="entry name" value="PROTEIN TUSC"/>
    <property type="match status" value="1"/>
</dbReference>
<dbReference type="Pfam" id="PF02635">
    <property type="entry name" value="DsrE"/>
    <property type="match status" value="1"/>
</dbReference>
<dbReference type="SUPFAM" id="SSF75169">
    <property type="entry name" value="DsrEFH-like"/>
    <property type="match status" value="1"/>
</dbReference>
<keyword id="KW-0963">Cytoplasm</keyword>
<keyword id="KW-0819">tRNA processing</keyword>
<name>TUSC_SALDC</name>
<gene>
    <name evidence="1" type="primary">tusC</name>
    <name type="ordered locus">SeD_A3818</name>
</gene>
<comment type="function">
    <text evidence="1">Part of a sulfur-relay system required for 2-thiolation of 5-methylaminomethyl-2-thiouridine (mnm(5)s(2)U) at tRNA wobble positions.</text>
</comment>
<comment type="subunit">
    <text evidence="1">Heterohexamer, formed by a dimer of trimers. The hexameric TusBCD complex contains 2 copies each of TusB, TusC and TusD. The TusBCD complex interacts with TusE.</text>
</comment>
<comment type="subcellular location">
    <subcellularLocation>
        <location evidence="1">Cytoplasm</location>
    </subcellularLocation>
</comment>
<comment type="similarity">
    <text evidence="1">Belongs to the DsrF/TusC family.</text>
</comment>
<sequence length="118" mass="13011">MKRIAFVFSTAPHGSASGREGLDALLATSALTEALGVFFISDGVFQLLPGQKPDAVLARDYIATFKLFDLYDIDQCWICAASLRERGLENVNFVVDATPLEPVALRRELGNYDVILRF</sequence>
<protein>
    <recommendedName>
        <fullName evidence="1">Protein TusC</fullName>
    </recommendedName>
    <alternativeName>
        <fullName evidence="1">tRNA 2-thiouridine synthesizing protein C</fullName>
    </alternativeName>
</protein>
<evidence type="ECO:0000255" key="1">
    <source>
        <dbReference type="HAMAP-Rule" id="MF_00389"/>
    </source>
</evidence>
<reference key="1">
    <citation type="journal article" date="2011" name="J. Bacteriol.">
        <title>Comparative genomics of 28 Salmonella enterica isolates: evidence for CRISPR-mediated adaptive sublineage evolution.</title>
        <authorList>
            <person name="Fricke W.F."/>
            <person name="Mammel M.K."/>
            <person name="McDermott P.F."/>
            <person name="Tartera C."/>
            <person name="White D.G."/>
            <person name="Leclerc J.E."/>
            <person name="Ravel J."/>
            <person name="Cebula T.A."/>
        </authorList>
    </citation>
    <scope>NUCLEOTIDE SEQUENCE [LARGE SCALE GENOMIC DNA]</scope>
    <source>
        <strain>CT_02021853</strain>
    </source>
</reference>
<feature type="chain" id="PRO_1000122845" description="Protein TusC">
    <location>
        <begin position="1"/>
        <end position="118"/>
    </location>
</feature>